<dbReference type="EC" id="2.2.1.9" evidence="1"/>
<dbReference type="EMBL" id="AE016879">
    <property type="protein sequence ID" value="AAP28783.1"/>
    <property type="molecule type" value="Genomic_DNA"/>
</dbReference>
<dbReference type="EMBL" id="AE017334">
    <property type="protein sequence ID" value="AAT34237.1"/>
    <property type="molecule type" value="Genomic_DNA"/>
</dbReference>
<dbReference type="EMBL" id="AE017225">
    <property type="protein sequence ID" value="AAT57044.1"/>
    <property type="molecule type" value="Genomic_DNA"/>
</dbReference>
<dbReference type="RefSeq" id="NP_847297.1">
    <property type="nucleotide sequence ID" value="NC_003997.3"/>
</dbReference>
<dbReference type="RefSeq" id="WP_001059187.1">
    <property type="nucleotide sequence ID" value="NZ_WXXJ01000032.1"/>
</dbReference>
<dbReference type="RefSeq" id="YP_030994.1">
    <property type="nucleotide sequence ID" value="NC_005945.1"/>
</dbReference>
<dbReference type="SMR" id="Q81K94"/>
<dbReference type="IntAct" id="Q81K94">
    <property type="interactions" value="1"/>
</dbReference>
<dbReference type="STRING" id="261594.GBAA_5111"/>
<dbReference type="DNASU" id="1084421"/>
<dbReference type="GeneID" id="45024717"/>
<dbReference type="KEGG" id="ban:BA_5111"/>
<dbReference type="KEGG" id="banh:HYU01_24880"/>
<dbReference type="KEGG" id="bar:GBAA_5111"/>
<dbReference type="KEGG" id="bat:BAS4750"/>
<dbReference type="PATRIC" id="fig|198094.11.peg.5072"/>
<dbReference type="eggNOG" id="COG1165">
    <property type="taxonomic scope" value="Bacteria"/>
</dbReference>
<dbReference type="HOGENOM" id="CLU_006051_3_0_9"/>
<dbReference type="OMA" id="YDSNALW"/>
<dbReference type="OrthoDB" id="9791859at2"/>
<dbReference type="UniPathway" id="UPA00079"/>
<dbReference type="UniPathway" id="UPA01057">
    <property type="reaction ID" value="UER00164"/>
</dbReference>
<dbReference type="Proteomes" id="UP000000427">
    <property type="component" value="Chromosome"/>
</dbReference>
<dbReference type="Proteomes" id="UP000000594">
    <property type="component" value="Chromosome"/>
</dbReference>
<dbReference type="GO" id="GO:0070204">
    <property type="term" value="F:2-succinyl-5-enolpyruvyl-6-hydroxy-3-cyclohexene-1-carboxylic-acid synthase activity"/>
    <property type="evidence" value="ECO:0007669"/>
    <property type="project" value="UniProtKB-UniRule"/>
</dbReference>
<dbReference type="GO" id="GO:0000287">
    <property type="term" value="F:magnesium ion binding"/>
    <property type="evidence" value="ECO:0007669"/>
    <property type="project" value="UniProtKB-UniRule"/>
</dbReference>
<dbReference type="GO" id="GO:0030145">
    <property type="term" value="F:manganese ion binding"/>
    <property type="evidence" value="ECO:0007669"/>
    <property type="project" value="UniProtKB-UniRule"/>
</dbReference>
<dbReference type="GO" id="GO:0030976">
    <property type="term" value="F:thiamine pyrophosphate binding"/>
    <property type="evidence" value="ECO:0007669"/>
    <property type="project" value="UniProtKB-UniRule"/>
</dbReference>
<dbReference type="GO" id="GO:0009234">
    <property type="term" value="P:menaquinone biosynthetic process"/>
    <property type="evidence" value="ECO:0007669"/>
    <property type="project" value="UniProtKB-UniRule"/>
</dbReference>
<dbReference type="CDD" id="cd07037">
    <property type="entry name" value="TPP_PYR_MenD"/>
    <property type="match status" value="1"/>
</dbReference>
<dbReference type="CDD" id="cd02009">
    <property type="entry name" value="TPP_SHCHC_synthase"/>
    <property type="match status" value="1"/>
</dbReference>
<dbReference type="Gene3D" id="3.40.50.970">
    <property type="match status" value="2"/>
</dbReference>
<dbReference type="Gene3D" id="3.40.50.1220">
    <property type="entry name" value="TPP-binding domain"/>
    <property type="match status" value="1"/>
</dbReference>
<dbReference type="HAMAP" id="MF_01659">
    <property type="entry name" value="MenD"/>
    <property type="match status" value="1"/>
</dbReference>
<dbReference type="InterPro" id="IPR029035">
    <property type="entry name" value="DHS-like_NAD/FAD-binding_dom"/>
</dbReference>
<dbReference type="InterPro" id="IPR004433">
    <property type="entry name" value="MenaQ_synth_MenD"/>
</dbReference>
<dbReference type="InterPro" id="IPR032264">
    <property type="entry name" value="MenD_middle"/>
</dbReference>
<dbReference type="InterPro" id="IPR029061">
    <property type="entry name" value="THDP-binding"/>
</dbReference>
<dbReference type="InterPro" id="IPR012001">
    <property type="entry name" value="Thiamin_PyroP_enz_TPP-bd_dom"/>
</dbReference>
<dbReference type="InterPro" id="IPR011766">
    <property type="entry name" value="TPP_enzyme_TPP-bd"/>
</dbReference>
<dbReference type="NCBIfam" id="TIGR00173">
    <property type="entry name" value="menD"/>
    <property type="match status" value="1"/>
</dbReference>
<dbReference type="PANTHER" id="PTHR42916">
    <property type="entry name" value="2-SUCCINYL-5-ENOLPYRUVYL-6-HYDROXY-3-CYCLOHEXENE-1-CARBOXYLATE SYNTHASE"/>
    <property type="match status" value="1"/>
</dbReference>
<dbReference type="PANTHER" id="PTHR42916:SF1">
    <property type="entry name" value="PROTEIN PHYLLO, CHLOROPLASTIC"/>
    <property type="match status" value="1"/>
</dbReference>
<dbReference type="Pfam" id="PF02775">
    <property type="entry name" value="TPP_enzyme_C"/>
    <property type="match status" value="1"/>
</dbReference>
<dbReference type="Pfam" id="PF16582">
    <property type="entry name" value="TPP_enzyme_M_2"/>
    <property type="match status" value="1"/>
</dbReference>
<dbReference type="Pfam" id="PF02776">
    <property type="entry name" value="TPP_enzyme_N"/>
    <property type="match status" value="1"/>
</dbReference>
<dbReference type="PIRSF" id="PIRSF004983">
    <property type="entry name" value="MenD"/>
    <property type="match status" value="1"/>
</dbReference>
<dbReference type="SUPFAM" id="SSF52467">
    <property type="entry name" value="DHS-like NAD/FAD-binding domain"/>
    <property type="match status" value="1"/>
</dbReference>
<dbReference type="SUPFAM" id="SSF52518">
    <property type="entry name" value="Thiamin diphosphate-binding fold (THDP-binding)"/>
    <property type="match status" value="2"/>
</dbReference>
<reference key="1">
    <citation type="journal article" date="2003" name="Nature">
        <title>The genome sequence of Bacillus anthracis Ames and comparison to closely related bacteria.</title>
        <authorList>
            <person name="Read T.D."/>
            <person name="Peterson S.N."/>
            <person name="Tourasse N.J."/>
            <person name="Baillie L.W."/>
            <person name="Paulsen I.T."/>
            <person name="Nelson K.E."/>
            <person name="Tettelin H."/>
            <person name="Fouts D.E."/>
            <person name="Eisen J.A."/>
            <person name="Gill S.R."/>
            <person name="Holtzapple E.K."/>
            <person name="Okstad O.A."/>
            <person name="Helgason E."/>
            <person name="Rilstone J."/>
            <person name="Wu M."/>
            <person name="Kolonay J.F."/>
            <person name="Beanan M.J."/>
            <person name="Dodson R.J."/>
            <person name="Brinkac L.M."/>
            <person name="Gwinn M.L."/>
            <person name="DeBoy R.T."/>
            <person name="Madpu R."/>
            <person name="Daugherty S.C."/>
            <person name="Durkin A.S."/>
            <person name="Haft D.H."/>
            <person name="Nelson W.C."/>
            <person name="Peterson J.D."/>
            <person name="Pop M."/>
            <person name="Khouri H.M."/>
            <person name="Radune D."/>
            <person name="Benton J.L."/>
            <person name="Mahamoud Y."/>
            <person name="Jiang L."/>
            <person name="Hance I.R."/>
            <person name="Weidman J.F."/>
            <person name="Berry K.J."/>
            <person name="Plaut R.D."/>
            <person name="Wolf A.M."/>
            <person name="Watkins K.L."/>
            <person name="Nierman W.C."/>
            <person name="Hazen A."/>
            <person name="Cline R.T."/>
            <person name="Redmond C."/>
            <person name="Thwaite J.E."/>
            <person name="White O."/>
            <person name="Salzberg S.L."/>
            <person name="Thomason B."/>
            <person name="Friedlander A.M."/>
            <person name="Koehler T.M."/>
            <person name="Hanna P.C."/>
            <person name="Kolstoe A.-B."/>
            <person name="Fraser C.M."/>
        </authorList>
    </citation>
    <scope>NUCLEOTIDE SEQUENCE [LARGE SCALE GENOMIC DNA]</scope>
    <source>
        <strain>Ames / isolate Porton</strain>
    </source>
</reference>
<reference key="2">
    <citation type="submission" date="2004-01" db="EMBL/GenBank/DDBJ databases">
        <title>Complete genome sequence of Bacillus anthracis Sterne.</title>
        <authorList>
            <person name="Brettin T.S."/>
            <person name="Bruce D."/>
            <person name="Challacombe J.F."/>
            <person name="Gilna P."/>
            <person name="Han C."/>
            <person name="Hill K."/>
            <person name="Hitchcock P."/>
            <person name="Jackson P."/>
            <person name="Keim P."/>
            <person name="Longmire J."/>
            <person name="Lucas S."/>
            <person name="Okinaka R."/>
            <person name="Richardson P."/>
            <person name="Rubin E."/>
            <person name="Tice H."/>
        </authorList>
    </citation>
    <scope>NUCLEOTIDE SEQUENCE [LARGE SCALE GENOMIC DNA]</scope>
    <source>
        <strain>Sterne</strain>
    </source>
</reference>
<reference key="3">
    <citation type="journal article" date="2009" name="J. Bacteriol.">
        <title>The complete genome sequence of Bacillus anthracis Ames 'Ancestor'.</title>
        <authorList>
            <person name="Ravel J."/>
            <person name="Jiang L."/>
            <person name="Stanley S.T."/>
            <person name="Wilson M.R."/>
            <person name="Decker R.S."/>
            <person name="Read T.D."/>
            <person name="Worsham P."/>
            <person name="Keim P.S."/>
            <person name="Salzberg S.L."/>
            <person name="Fraser-Liggett C.M."/>
            <person name="Rasko D.A."/>
        </authorList>
    </citation>
    <scope>NUCLEOTIDE SEQUENCE [LARGE SCALE GENOMIC DNA]</scope>
    <source>
        <strain>Ames ancestor</strain>
    </source>
</reference>
<gene>
    <name evidence="1" type="primary">menD</name>
    <name type="ordered locus">BA_5111</name>
    <name type="ordered locus">GBAA_5111</name>
    <name type="ordered locus">BAS4750</name>
</gene>
<sequence>MNNHIEALSYYLGAFVDELTLLNVCDVVISPGSRSTPIALLMEQHEGMNTYLHVDERSAGFFALGIAKAKKRPVALLCTSGTAAANYYPAVCEAFHSRVPLIVLTADRPHELRDVGAPQAMNQINLYGTFVKQFTEMALPEASEAMYHYARLTTQRMIASACLAPQGPVHLNFPVREPLIPDFSLESLWDKGRGEYTGVVQQGNAVMPSEYVDSLVGRLSHMEKGLIICGDDSHSEIAAFATQLAEKTGYPILADPLSNIRSGHHDKTMVIDCYDTFLRNELLKETWKPDVLIRFGGMPVSKALTQFIKKQTKAVHIVVDESGQWRDPALVATEVVQASDIAFCSALIEKMPVMKKNDWFRMWQHINEKTKETLREMETYDTAFEGRVITDIVRVLPEGATLFASNSMPIRDTDSFFFTSDKNIQVMANRGVNGIDGIISTALGASMICDPLVLVIGDLSFYHDLNGLLAAKLHELNITIVVVNNDGGGIFSFLPQYEKKEHFESLFGTPIGLDYEHVVTMYGGSFSRVNGWEQFREEVQKGVTTEGLHVVEICTNRDENLTLHRTLWAKTQDVITTSLQGESK</sequence>
<organism>
    <name type="scientific">Bacillus anthracis</name>
    <dbReference type="NCBI Taxonomy" id="1392"/>
    <lineage>
        <taxon>Bacteria</taxon>
        <taxon>Bacillati</taxon>
        <taxon>Bacillota</taxon>
        <taxon>Bacilli</taxon>
        <taxon>Bacillales</taxon>
        <taxon>Bacillaceae</taxon>
        <taxon>Bacillus</taxon>
        <taxon>Bacillus cereus group</taxon>
    </lineage>
</organism>
<evidence type="ECO:0000255" key="1">
    <source>
        <dbReference type="HAMAP-Rule" id="MF_01659"/>
    </source>
</evidence>
<feature type="chain" id="PRO_0000341704" description="2-succinyl-5-enolpyruvyl-6-hydroxy-3-cyclohexene-1-carboxylate synthase">
    <location>
        <begin position="1"/>
        <end position="584"/>
    </location>
</feature>
<proteinExistence type="inferred from homology"/>
<comment type="function">
    <text evidence="1">Catalyzes the thiamine diphosphate-dependent decarboxylation of 2-oxoglutarate and the subsequent addition of the resulting succinic semialdehyde-thiamine pyrophosphate anion to isochorismate to yield 2-succinyl-5-enolpyruvyl-6-hydroxy-3-cyclohexene-1-carboxylate (SEPHCHC).</text>
</comment>
<comment type="catalytic activity">
    <reaction evidence="1">
        <text>isochorismate + 2-oxoglutarate + H(+) = 5-enolpyruvoyl-6-hydroxy-2-succinyl-cyclohex-3-ene-1-carboxylate + CO2</text>
        <dbReference type="Rhea" id="RHEA:25593"/>
        <dbReference type="ChEBI" id="CHEBI:15378"/>
        <dbReference type="ChEBI" id="CHEBI:16526"/>
        <dbReference type="ChEBI" id="CHEBI:16810"/>
        <dbReference type="ChEBI" id="CHEBI:29780"/>
        <dbReference type="ChEBI" id="CHEBI:58818"/>
        <dbReference type="EC" id="2.2.1.9"/>
    </reaction>
</comment>
<comment type="cofactor">
    <cofactor evidence="1">
        <name>Mg(2+)</name>
        <dbReference type="ChEBI" id="CHEBI:18420"/>
    </cofactor>
    <cofactor evidence="1">
        <name>Mn(2+)</name>
        <dbReference type="ChEBI" id="CHEBI:29035"/>
    </cofactor>
</comment>
<comment type="cofactor">
    <cofactor evidence="1">
        <name>thiamine diphosphate</name>
        <dbReference type="ChEBI" id="CHEBI:58937"/>
    </cofactor>
    <text evidence="1">Binds 1 thiamine pyrophosphate per subunit.</text>
</comment>
<comment type="pathway">
    <text evidence="1">Quinol/quinone metabolism; 1,4-dihydroxy-2-naphthoate biosynthesis; 1,4-dihydroxy-2-naphthoate from chorismate: step 2/7.</text>
</comment>
<comment type="pathway">
    <text evidence="1">Quinol/quinone metabolism; menaquinone biosynthesis.</text>
</comment>
<comment type="subunit">
    <text evidence="1">Homodimer.</text>
</comment>
<comment type="similarity">
    <text evidence="1">Belongs to the TPP enzyme family. MenD subfamily.</text>
</comment>
<protein>
    <recommendedName>
        <fullName evidence="1">2-succinyl-5-enolpyruvyl-6-hydroxy-3-cyclohexene-1-carboxylate synthase</fullName>
        <shortName evidence="1">SEPHCHC synthase</shortName>
        <ecNumber evidence="1">2.2.1.9</ecNumber>
    </recommendedName>
    <alternativeName>
        <fullName evidence="1">Menaquinone biosynthesis protein MenD</fullName>
    </alternativeName>
</protein>
<accession>Q81K94</accession>
<accession>Q6HRP4</accession>
<accession>Q6KL11</accession>
<keyword id="KW-0460">Magnesium</keyword>
<keyword id="KW-0464">Manganese</keyword>
<keyword id="KW-0474">Menaquinone biosynthesis</keyword>
<keyword id="KW-0479">Metal-binding</keyword>
<keyword id="KW-1185">Reference proteome</keyword>
<keyword id="KW-0786">Thiamine pyrophosphate</keyword>
<keyword id="KW-0808">Transferase</keyword>
<name>MEND_BACAN</name>